<proteinExistence type="predicted"/>
<protein>
    <recommendedName>
        <fullName>Uncharacterized protein AF_2340</fullName>
    </recommendedName>
</protein>
<sequence>MRIATAVYLYSLYPDESKKGANSRQIFRALGDESLDPSTIDAYLERLYDEIATHIFRAEGTDRYYFKTEENPRALVRYAAKDVKDEEVKLHLQKQLVGKIIPSTDVVAVNIFEKEIKRDNTDPGKLNLFVIDYEEVFRIYAHLKRSKEYESEAEDVVAREAFSRIFSQMLSITAPNRNSVVLLFPVAGGIPSFMSDVKELIACEKLKKERSKDKEFLKELKAIQERIYAKTAQKLINLYSYAGFFRKNDQVIGQLSPLTYDEKAKYTERIFEELERKWGKVLSSASEDYIYGVMGKEKDYIKLSELINTIANSTGYPFVPAKYLKGSIKELVKAGEIAVYRGEICDPEEVDLRKSEEIVKSLKLGIELGEIRDSDYVVKKEFAEELLGAAKRKRADEAANRILEVLGDRNYAEISSIESELPDLSRKDIVDAVKRSQRLELYGGDISLIRKVEEGAELSESEKEEILSGFNAEHGEFIFKKEYAEGIKNKIRTVEWEPPEISEDEERKGEEIKVSDLIERFEDFEGRRVKRIKVKGSGSNSLKEDALNLGGAVPFLNLKGKIAVDLKGRVFFKCSSELEKAGIIEEILRKIAELDSNPEYSVELEIDAEVNDDFRIFAEQLTSTKSEKTLVVE</sequence>
<accession>O27944</accession>
<dbReference type="EMBL" id="AE000782">
    <property type="protein sequence ID" value="AAB88925.1"/>
    <property type="molecule type" value="Genomic_DNA"/>
</dbReference>
<dbReference type="PIR" id="D69542">
    <property type="entry name" value="D69542"/>
</dbReference>
<dbReference type="STRING" id="224325.AF_2340"/>
<dbReference type="PaxDb" id="224325-AF_2340"/>
<dbReference type="EnsemblBacteria" id="AAB88925">
    <property type="protein sequence ID" value="AAB88925"/>
    <property type="gene ID" value="AF_2340"/>
</dbReference>
<dbReference type="KEGG" id="afu:AF_2340"/>
<dbReference type="eggNOG" id="arCOG00887">
    <property type="taxonomic scope" value="Archaea"/>
</dbReference>
<dbReference type="HOGENOM" id="CLU_431901_0_0_2"/>
<dbReference type="Proteomes" id="UP000002199">
    <property type="component" value="Chromosome"/>
</dbReference>
<reference key="1">
    <citation type="journal article" date="1997" name="Nature">
        <title>The complete genome sequence of the hyperthermophilic, sulphate-reducing archaeon Archaeoglobus fulgidus.</title>
        <authorList>
            <person name="Klenk H.-P."/>
            <person name="Clayton R.A."/>
            <person name="Tomb J.-F."/>
            <person name="White O."/>
            <person name="Nelson K.E."/>
            <person name="Ketchum K.A."/>
            <person name="Dodson R.J."/>
            <person name="Gwinn M.L."/>
            <person name="Hickey E.K."/>
            <person name="Peterson J.D."/>
            <person name="Richardson D.L."/>
            <person name="Kerlavage A.R."/>
            <person name="Graham D.E."/>
            <person name="Kyrpides N.C."/>
            <person name="Fleischmann R.D."/>
            <person name="Quackenbush J."/>
            <person name="Lee N.H."/>
            <person name="Sutton G.G."/>
            <person name="Gill S.R."/>
            <person name="Kirkness E.F."/>
            <person name="Dougherty B.A."/>
            <person name="McKenney K."/>
            <person name="Adams M.D."/>
            <person name="Loftus B.J."/>
            <person name="Peterson S.N."/>
            <person name="Reich C.I."/>
            <person name="McNeil L.K."/>
            <person name="Badger J.H."/>
            <person name="Glodek A."/>
            <person name="Zhou L."/>
            <person name="Overbeek R."/>
            <person name="Gocayne J.D."/>
            <person name="Weidman J.F."/>
            <person name="McDonald L.A."/>
            <person name="Utterback T.R."/>
            <person name="Cotton M.D."/>
            <person name="Spriggs T."/>
            <person name="Artiach P."/>
            <person name="Kaine B.P."/>
            <person name="Sykes S.M."/>
            <person name="Sadow P.W."/>
            <person name="D'Andrea K.P."/>
            <person name="Bowman C."/>
            <person name="Fujii C."/>
            <person name="Garland S.A."/>
            <person name="Mason T.M."/>
            <person name="Olsen G.J."/>
            <person name="Fraser C.M."/>
            <person name="Smith H.O."/>
            <person name="Woese C.R."/>
            <person name="Venter J.C."/>
        </authorList>
    </citation>
    <scope>NUCLEOTIDE SEQUENCE [LARGE SCALE GENOMIC DNA]</scope>
    <source>
        <strain>ATCC 49558 / DSM 4304 / JCM 9628 / NBRC 100126 / VC-16</strain>
    </source>
</reference>
<organism>
    <name type="scientific">Archaeoglobus fulgidus (strain ATCC 49558 / DSM 4304 / JCM 9628 / NBRC 100126 / VC-16)</name>
    <dbReference type="NCBI Taxonomy" id="224325"/>
    <lineage>
        <taxon>Archaea</taxon>
        <taxon>Methanobacteriati</taxon>
        <taxon>Methanobacteriota</taxon>
        <taxon>Archaeoglobi</taxon>
        <taxon>Archaeoglobales</taxon>
        <taxon>Archaeoglobaceae</taxon>
        <taxon>Archaeoglobus</taxon>
    </lineage>
</organism>
<gene>
    <name type="ordered locus">AF_2340</name>
</gene>
<name>Y2340_ARCFU</name>
<feature type="chain" id="PRO_0000128141" description="Uncharacterized protein AF_2340">
    <location>
        <begin position="1"/>
        <end position="633"/>
    </location>
</feature>
<keyword id="KW-1185">Reference proteome</keyword>